<sequence length="562" mass="66140">MENQKMPISSVSNLKDLNMISRPVANFPPSIWGDRFINYACEDENEQAQKERQVEELKEQVRRELATAIDKPLQQLNIIDATQRLGIAYHFENEIEESLKHIYLHTYVENTCFEGSDDLYSVALWFRLLRQDDYRVSCDVFKKFRDSEGNFKNSLMEDAKGLLELYEATHLSVNGEEMLDDALEFTKTHLELVVSHLNYPLAEQVRHALYQPQHKGLPRLEAVYFFRIYEAYDSHNEALLKLAKLDFNLLQSLHMKELSHMAKWWKSLDFATKFPFARDRLVEGYFWILGVYFEPQYSLARKIIIKVFTMISTIDDIYDAYGTLDELKLFTKAIQRWDIGSLDQLPEYMKPCYKSVLDVYNEIEEEMDNQGSLFRMHYAKEEMKKIVEGYMDEAKWCHEKYVPTFQEYMSVALVTAGYTFLTTISYLGMGEIASKEAFDWLFSRPPIIEASESVCRLMDDMRSHEFEQERGHVASGIECYMKQYGVTEEEAHDKFHKRLVKAWKDINEGCLRPYPMPKPLLMRILSLTRVIDVIYKNEDWYTHVKKPMKDKIASLLIDPMIV</sequence>
<comment type="function">
    <text evidence="1">Sesquiterpene synthase.</text>
</comment>
<comment type="cofactor">
    <cofactor evidence="1">
        <name>Mg(2+)</name>
        <dbReference type="ChEBI" id="CHEBI:18420"/>
    </cofactor>
    <cofactor evidence="1">
        <name>Mn(2+)</name>
        <dbReference type="ChEBI" id="CHEBI:29035"/>
    </cofactor>
    <text evidence="1">Binds 3 Mg(2+) or Mn(2+) ions per subunit.</text>
</comment>
<comment type="similarity">
    <text evidence="2">Belongs to the terpene synthase family. Tpsa subfamily.</text>
</comment>
<accession>F6M8H6</accession>
<dbReference type="EC" id="4.2.3.-"/>
<dbReference type="EMBL" id="JF746809">
    <property type="protein sequence ID" value="AEF32536.1"/>
    <property type="molecule type" value="Genomic_DNA"/>
</dbReference>
<dbReference type="SMR" id="F6M8H6"/>
<dbReference type="GO" id="GO:0000287">
    <property type="term" value="F:magnesium ion binding"/>
    <property type="evidence" value="ECO:0007669"/>
    <property type="project" value="InterPro"/>
</dbReference>
<dbReference type="GO" id="GO:0010333">
    <property type="term" value="F:terpene synthase activity"/>
    <property type="evidence" value="ECO:0007669"/>
    <property type="project" value="InterPro"/>
</dbReference>
<dbReference type="GO" id="GO:0016102">
    <property type="term" value="P:diterpenoid biosynthetic process"/>
    <property type="evidence" value="ECO:0007669"/>
    <property type="project" value="InterPro"/>
</dbReference>
<dbReference type="CDD" id="cd00684">
    <property type="entry name" value="Terpene_cyclase_plant_C1"/>
    <property type="match status" value="1"/>
</dbReference>
<dbReference type="FunFam" id="1.10.600.10:FF:000007">
    <property type="entry name" value="Isoprene synthase, chloroplastic"/>
    <property type="match status" value="1"/>
</dbReference>
<dbReference type="FunFam" id="1.50.10.130:FF:000001">
    <property type="entry name" value="Isoprene synthase, chloroplastic"/>
    <property type="match status" value="1"/>
</dbReference>
<dbReference type="Gene3D" id="1.10.600.10">
    <property type="entry name" value="Farnesyl Diphosphate Synthase"/>
    <property type="match status" value="1"/>
</dbReference>
<dbReference type="Gene3D" id="1.50.10.130">
    <property type="entry name" value="Terpene synthase, N-terminal domain"/>
    <property type="match status" value="1"/>
</dbReference>
<dbReference type="InterPro" id="IPR008949">
    <property type="entry name" value="Isoprenoid_synthase_dom_sf"/>
</dbReference>
<dbReference type="InterPro" id="IPR034741">
    <property type="entry name" value="Terpene_cyclase-like_1_C"/>
</dbReference>
<dbReference type="InterPro" id="IPR044814">
    <property type="entry name" value="Terpene_cyclase_plant_C1"/>
</dbReference>
<dbReference type="InterPro" id="IPR001906">
    <property type="entry name" value="Terpene_synth_N"/>
</dbReference>
<dbReference type="InterPro" id="IPR036965">
    <property type="entry name" value="Terpene_synth_N_sf"/>
</dbReference>
<dbReference type="InterPro" id="IPR050148">
    <property type="entry name" value="Terpene_synthase-like"/>
</dbReference>
<dbReference type="InterPro" id="IPR005630">
    <property type="entry name" value="Terpene_synthase_metal-bd"/>
</dbReference>
<dbReference type="InterPro" id="IPR008930">
    <property type="entry name" value="Terpenoid_cyclase/PrenylTrfase"/>
</dbReference>
<dbReference type="PANTHER" id="PTHR31225:SF93">
    <property type="entry name" value="ALPHA-HUMULENE_(-)-(E)-BETA-CARYOPHYLLENE SYNTHASE"/>
    <property type="match status" value="1"/>
</dbReference>
<dbReference type="PANTHER" id="PTHR31225">
    <property type="entry name" value="OS04G0344100 PROTEIN-RELATED"/>
    <property type="match status" value="1"/>
</dbReference>
<dbReference type="Pfam" id="PF01397">
    <property type="entry name" value="Terpene_synth"/>
    <property type="match status" value="1"/>
</dbReference>
<dbReference type="Pfam" id="PF03936">
    <property type="entry name" value="Terpene_synth_C"/>
    <property type="match status" value="1"/>
</dbReference>
<dbReference type="SFLD" id="SFLDS00005">
    <property type="entry name" value="Isoprenoid_Synthase_Type_I"/>
    <property type="match status" value="1"/>
</dbReference>
<dbReference type="SFLD" id="SFLDG01019">
    <property type="entry name" value="Terpene_Cyclase_Like_1_C_Termi"/>
    <property type="match status" value="1"/>
</dbReference>
<dbReference type="SUPFAM" id="SSF48239">
    <property type="entry name" value="Terpenoid cyclases/Protein prenyltransferases"/>
    <property type="match status" value="1"/>
</dbReference>
<dbReference type="SUPFAM" id="SSF48576">
    <property type="entry name" value="Terpenoid synthases"/>
    <property type="match status" value="1"/>
</dbReference>
<gene>
    <name type="primary">SesquiTPS</name>
</gene>
<keyword id="KW-0456">Lyase</keyword>
<keyword id="KW-0460">Magnesium</keyword>
<keyword id="KW-0464">Manganese</keyword>
<keyword id="KW-0479">Metal-binding</keyword>
<reference key="1">
    <citation type="journal article" date="2011" name="J. Biol. Chem.">
        <title>Sandalwood fragrance biosynthesis involves sesquiterpene synthases of both the terpene synthase (TPS)-a and TPS-b Subfamilies, including santalene synthases.</title>
        <authorList>
            <person name="Jones C.G."/>
            <person name="Moniodis J."/>
            <person name="Zulak K.G."/>
            <person name="Scaffidi A."/>
            <person name="Plummer J.A."/>
            <person name="Ghisalberti E.L."/>
            <person name="Barbour E.L."/>
            <person name="Bohlmann J."/>
        </authorList>
    </citation>
    <scope>NUCLEOTIDE SEQUENCE [GENOMIC DNA]</scope>
</reference>
<feature type="chain" id="PRO_0000419327" description="Probable sesquiterpene synthase">
    <location>
        <begin position="1"/>
        <end position="562"/>
    </location>
</feature>
<feature type="short sequence motif" description="DDXXD motif">
    <location>
        <begin position="315"/>
        <end position="319"/>
    </location>
</feature>
<feature type="binding site" evidence="1">
    <location>
        <position position="315"/>
    </location>
    <ligand>
        <name>Mg(2+)</name>
        <dbReference type="ChEBI" id="CHEBI:18420"/>
        <label>1</label>
    </ligand>
</feature>
<feature type="binding site" evidence="1">
    <location>
        <position position="315"/>
    </location>
    <ligand>
        <name>Mg(2+)</name>
        <dbReference type="ChEBI" id="CHEBI:18420"/>
        <label>2</label>
    </ligand>
</feature>
<feature type="binding site" evidence="1">
    <location>
        <position position="319"/>
    </location>
    <ligand>
        <name>Mg(2+)</name>
        <dbReference type="ChEBI" id="CHEBI:18420"/>
        <label>1</label>
    </ligand>
</feature>
<feature type="binding site" evidence="1">
    <location>
        <position position="319"/>
    </location>
    <ligand>
        <name>Mg(2+)</name>
        <dbReference type="ChEBI" id="CHEBI:18420"/>
        <label>2</label>
    </ligand>
</feature>
<feature type="binding site" evidence="1">
    <location>
        <position position="467"/>
    </location>
    <ligand>
        <name>Mg(2+)</name>
        <dbReference type="ChEBI" id="CHEBI:18420"/>
        <label>3</label>
    </ligand>
</feature>
<organism>
    <name type="scientific">Santalum spicatum</name>
    <name type="common">Australian sandalwood</name>
    <dbReference type="NCBI Taxonomy" id="453088"/>
    <lineage>
        <taxon>Eukaryota</taxon>
        <taxon>Viridiplantae</taxon>
        <taxon>Streptophyta</taxon>
        <taxon>Embryophyta</taxon>
        <taxon>Tracheophyta</taxon>
        <taxon>Spermatophyta</taxon>
        <taxon>Magnoliopsida</taxon>
        <taxon>eudicotyledons</taxon>
        <taxon>Gunneridae</taxon>
        <taxon>Pentapetalae</taxon>
        <taxon>Santalales</taxon>
        <taxon>Santalaceae</taxon>
        <taxon>Santalum</taxon>
    </lineage>
</organism>
<protein>
    <recommendedName>
        <fullName>Probable sesquiterpene synthase</fullName>
        <shortName>SspiSTPS</shortName>
        <ecNumber>4.2.3.-</ecNumber>
    </recommendedName>
</protein>
<proteinExistence type="inferred from homology"/>
<name>SPIST_SANSP</name>
<evidence type="ECO:0000250" key="1"/>
<evidence type="ECO:0000305" key="2"/>